<protein>
    <recommendedName>
        <fullName>Membrane protein insertase YidC</fullName>
    </recommendedName>
    <alternativeName>
        <fullName>Foldase YidC</fullName>
    </alternativeName>
    <alternativeName>
        <fullName>Membrane integrase YidC</fullName>
    </alternativeName>
    <alternativeName>
        <fullName>Membrane protein YidC</fullName>
    </alternativeName>
</protein>
<name>YIDC_PROMA</name>
<feature type="chain" id="PRO_0000124737" description="Membrane protein insertase YidC">
    <location>
        <begin position="1"/>
        <end position="382"/>
    </location>
</feature>
<feature type="transmembrane region" description="Helical" evidence="2">
    <location>
        <begin position="20"/>
        <end position="42"/>
    </location>
</feature>
<feature type="transmembrane region" description="Helical" evidence="2">
    <location>
        <begin position="93"/>
        <end position="113"/>
    </location>
</feature>
<feature type="transmembrane region" description="Helical" evidence="2">
    <location>
        <begin position="260"/>
        <end position="280"/>
    </location>
</feature>
<feature type="transmembrane region" description="Helical" evidence="2">
    <location>
        <begin position="303"/>
        <end position="323"/>
    </location>
</feature>
<feature type="region of interest" description="Disordered" evidence="3">
    <location>
        <begin position="356"/>
        <end position="382"/>
    </location>
</feature>
<feature type="compositionally biased region" description="Basic and acidic residues" evidence="3">
    <location>
        <begin position="368"/>
        <end position="382"/>
    </location>
</feature>
<keyword id="KW-0997">Cell inner membrane</keyword>
<keyword id="KW-1003">Cell membrane</keyword>
<keyword id="KW-0143">Chaperone</keyword>
<keyword id="KW-0472">Membrane</keyword>
<keyword id="KW-0653">Protein transport</keyword>
<keyword id="KW-1185">Reference proteome</keyword>
<keyword id="KW-0812">Transmembrane</keyword>
<keyword id="KW-1133">Transmembrane helix</keyword>
<keyword id="KW-0813">Transport</keyword>
<proteinExistence type="inferred from homology"/>
<evidence type="ECO:0000250" key="1"/>
<evidence type="ECO:0000255" key="2"/>
<evidence type="ECO:0000256" key="3">
    <source>
        <dbReference type="SAM" id="MobiDB-lite"/>
    </source>
</evidence>
<evidence type="ECO:0000305" key="4"/>
<dbReference type="EMBL" id="AE017126">
    <property type="protein sequence ID" value="AAQ00346.1"/>
    <property type="molecule type" value="Genomic_DNA"/>
</dbReference>
<dbReference type="RefSeq" id="NP_875693.1">
    <property type="nucleotide sequence ID" value="NC_005042.1"/>
</dbReference>
<dbReference type="RefSeq" id="WP_011125453.1">
    <property type="nucleotide sequence ID" value="NC_005042.1"/>
</dbReference>
<dbReference type="STRING" id="167539.Pro_1302"/>
<dbReference type="EnsemblBacteria" id="AAQ00346">
    <property type="protein sequence ID" value="AAQ00346"/>
    <property type="gene ID" value="Pro_1302"/>
</dbReference>
<dbReference type="KEGG" id="pma:Pro_1302"/>
<dbReference type="PATRIC" id="fig|167539.5.peg.1367"/>
<dbReference type="eggNOG" id="COG0706">
    <property type="taxonomic scope" value="Bacteria"/>
</dbReference>
<dbReference type="HOGENOM" id="CLU_038573_0_0_3"/>
<dbReference type="OrthoDB" id="9780552at2"/>
<dbReference type="Proteomes" id="UP000001420">
    <property type="component" value="Chromosome"/>
</dbReference>
<dbReference type="GO" id="GO:0005886">
    <property type="term" value="C:plasma membrane"/>
    <property type="evidence" value="ECO:0007669"/>
    <property type="project" value="UniProtKB-SubCell"/>
</dbReference>
<dbReference type="GO" id="GO:0032977">
    <property type="term" value="F:membrane insertase activity"/>
    <property type="evidence" value="ECO:0007669"/>
    <property type="project" value="InterPro"/>
</dbReference>
<dbReference type="GO" id="GO:0051205">
    <property type="term" value="P:protein insertion into membrane"/>
    <property type="evidence" value="ECO:0007669"/>
    <property type="project" value="TreeGrafter"/>
</dbReference>
<dbReference type="GO" id="GO:0015031">
    <property type="term" value="P:protein transport"/>
    <property type="evidence" value="ECO:0007669"/>
    <property type="project" value="UniProtKB-KW"/>
</dbReference>
<dbReference type="CDD" id="cd20070">
    <property type="entry name" value="5TM_YidC_Alb3"/>
    <property type="match status" value="1"/>
</dbReference>
<dbReference type="InterPro" id="IPR001708">
    <property type="entry name" value="YidC/ALB3/OXA1/COX18"/>
</dbReference>
<dbReference type="InterPro" id="IPR028055">
    <property type="entry name" value="YidC/Oxa/ALB_C"/>
</dbReference>
<dbReference type="InterPro" id="IPR047196">
    <property type="entry name" value="YidC_ALB_C"/>
</dbReference>
<dbReference type="NCBIfam" id="NF002734">
    <property type="entry name" value="PRK02654.1"/>
    <property type="match status" value="1"/>
</dbReference>
<dbReference type="NCBIfam" id="TIGR03592">
    <property type="entry name" value="yidC_oxa1_cterm"/>
    <property type="match status" value="1"/>
</dbReference>
<dbReference type="PANTHER" id="PTHR12428:SF65">
    <property type="entry name" value="CYTOCHROME C OXIDASE ASSEMBLY PROTEIN COX18, MITOCHONDRIAL"/>
    <property type="match status" value="1"/>
</dbReference>
<dbReference type="PANTHER" id="PTHR12428">
    <property type="entry name" value="OXA1"/>
    <property type="match status" value="1"/>
</dbReference>
<dbReference type="Pfam" id="PF02096">
    <property type="entry name" value="60KD_IMP"/>
    <property type="match status" value="1"/>
</dbReference>
<accession>Q7VB00</accession>
<sequence>MIGFLSDNLLIPILDFFYGLFHSYGIAIVALTIVIRIALFPLSAGSIRSARRMKIAQPVMQKRQAEIKSRYANDPKKQQDELGKLMGEFGSPLAGCLPLLVQMPILFALFATLRGSPFADVPYLVNLKILPPEQIAAVEPKPFKSPRHSIFISDKDHFPVIASLPGGTKIAAGDSVNIKLETLSGEKYSNVLGKFENGSKFSPTWKLTKGADLASVSADGTVTAKYPGDATVEGKIPGLAAKSGFLFIKALGQVGFYVDGAINWDIAILVAGFGLTLVISQVLSGQGMPPNPQQATAQKITPIMITGMFLFFPLPAGVLLYMVIANMFQAFQTFLLNKEALPENLQKILDDQIKNQGKKELATSPAIDSERLPFEPKSNKQN</sequence>
<comment type="function">
    <text evidence="1">Required for the insertion and/or proper folding and/or complex formation of integral membrane proteins into the membrane. Involved in integration of membrane proteins that insert both dependently and independently of the Sec translocase complex, as well as at least some lipoproteins. Aids folding of multispanning membrane proteins (By similarity).</text>
</comment>
<comment type="function">
    <text evidence="1">Probably also aids protein insertion, folding and/or assembly of membrane complexes destined for the thylakoid.</text>
</comment>
<comment type="subunit">
    <text evidence="1">Interacts with the Sec translocase complex via SecD. Specifically interacts with transmembrane segments of nascent integral membrane proteins during membrane integration (By similarity).</text>
</comment>
<comment type="subcellular location">
    <subcellularLocation>
        <location evidence="1">Cell inner membrane</location>
        <topology evidence="1">Multi-pass membrane protein</topology>
    </subcellularLocation>
</comment>
<comment type="similarity">
    <text evidence="4">Belongs to the OXA1/ALB3/YidC family. Type 1 subfamily.</text>
</comment>
<gene>
    <name type="primary">yidC</name>
    <name type="ordered locus">Pro_1302</name>
</gene>
<organism>
    <name type="scientific">Prochlorococcus marinus (strain SARG / CCMP1375 / SS120)</name>
    <dbReference type="NCBI Taxonomy" id="167539"/>
    <lineage>
        <taxon>Bacteria</taxon>
        <taxon>Bacillati</taxon>
        <taxon>Cyanobacteriota</taxon>
        <taxon>Cyanophyceae</taxon>
        <taxon>Synechococcales</taxon>
        <taxon>Prochlorococcaceae</taxon>
        <taxon>Prochlorococcus</taxon>
    </lineage>
</organism>
<reference key="1">
    <citation type="journal article" date="2003" name="Proc. Natl. Acad. Sci. U.S.A.">
        <title>Genome sequence of the cyanobacterium Prochlorococcus marinus SS120, a nearly minimal oxyphototrophic genome.</title>
        <authorList>
            <person name="Dufresne A."/>
            <person name="Salanoubat M."/>
            <person name="Partensky F."/>
            <person name="Artiguenave F."/>
            <person name="Axmann I.M."/>
            <person name="Barbe V."/>
            <person name="Duprat S."/>
            <person name="Galperin M.Y."/>
            <person name="Koonin E.V."/>
            <person name="Le Gall F."/>
            <person name="Makarova K.S."/>
            <person name="Ostrowski M."/>
            <person name="Oztas S."/>
            <person name="Robert C."/>
            <person name="Rogozin I.B."/>
            <person name="Scanlan D.J."/>
            <person name="Tandeau de Marsac N."/>
            <person name="Weissenbach J."/>
            <person name="Wincker P."/>
            <person name="Wolf Y.I."/>
            <person name="Hess W.R."/>
        </authorList>
    </citation>
    <scope>NUCLEOTIDE SEQUENCE [LARGE SCALE GENOMIC DNA]</scope>
    <source>
        <strain>SARG / CCMP1375 / SS120</strain>
    </source>
</reference>